<reference key="1">
    <citation type="journal article" date="1988" name="Nucleic Acids Res.">
        <title>The nucleotide sequence of human transition protein 1 cDNA.</title>
        <authorList>
            <person name="Luerssen H."/>
            <person name="Hoyer-Fender S."/>
            <person name="Engel W."/>
        </authorList>
    </citation>
    <scope>NUCLEOTIDE SEQUENCE [MRNA]</scope>
</reference>
<reference key="2">
    <citation type="journal article" date="1990" name="Genomics">
        <title>Nucleotide sequence of the gene for human transition protein 1 and its chromosomal localization on chromosome 2.</title>
        <authorList>
            <person name="Luerssen H."/>
            <person name="Mattei M.-G."/>
            <person name="Schroeter M."/>
            <person name="Grzeschik K.H."/>
            <person name="Adham I.M."/>
            <person name="Engel W."/>
        </authorList>
    </citation>
    <scope>NUCLEOTIDE SEQUENCE [GENOMIC DNA]</scope>
</reference>
<reference key="3">
    <citation type="journal article" date="2004" name="Genome Res.">
        <title>The status, quality, and expansion of the NIH full-length cDNA project: the Mammalian Gene Collection (MGC).</title>
        <authorList>
            <consortium name="The MGC Project Team"/>
        </authorList>
    </citation>
    <scope>NUCLEOTIDE SEQUENCE [LARGE SCALE MRNA]</scope>
    <source>
        <tissue>Testis</tissue>
    </source>
</reference>
<reference key="4">
    <citation type="journal article" date="1998" name="Mol. Hum. Reprod.">
        <title>Expression of mRNA and protein of nucleoproteins during human spermiogenesis.</title>
        <authorList>
            <person name="Steger K."/>
            <person name="Klonisch T."/>
            <person name="Gavenis K."/>
            <person name="Drabent B."/>
            <person name="Doenecke D."/>
            <person name="Bergmann M."/>
        </authorList>
    </citation>
    <scope>TISSUE SPECIFICITY</scope>
</reference>
<accession>P09430</accession>
<evidence type="ECO:0000250" key="1">
    <source>
        <dbReference type="UniProtKB" id="P10856"/>
    </source>
</evidence>
<evidence type="ECO:0000250" key="2">
    <source>
        <dbReference type="UniProtKB" id="P22613"/>
    </source>
</evidence>
<evidence type="ECO:0000256" key="3">
    <source>
        <dbReference type="SAM" id="MobiDB-lite"/>
    </source>
</evidence>
<evidence type="ECO:0000269" key="4">
    <source>
    </source>
</evidence>
<evidence type="ECO:0000305" key="5"/>
<proteinExistence type="evidence at protein level"/>
<feature type="chain" id="PRO_0000191417" description="Spermatid nuclear transition protein 1">
    <location>
        <begin position="1"/>
        <end position="55"/>
    </location>
</feature>
<feature type="region of interest" description="Disordered" evidence="3">
    <location>
        <begin position="1"/>
        <end position="55"/>
    </location>
</feature>
<feature type="compositionally biased region" description="Basic residues" evidence="3">
    <location>
        <begin position="1"/>
        <end position="42"/>
    </location>
</feature>
<feature type="modified residue" description="Phosphoserine" evidence="2">
    <location>
        <position position="9"/>
    </location>
</feature>
<feature type="modified residue" description="Phosphoserine" evidence="2">
    <location>
        <position position="40"/>
    </location>
</feature>
<protein>
    <recommendedName>
        <fullName>Spermatid nuclear transition protein 1</fullName>
        <shortName>STP-1</shortName>
        <shortName>TP-1</shortName>
    </recommendedName>
</protein>
<dbReference type="EMBL" id="M59924">
    <property type="protein sequence ID" value="AAA61202.1"/>
    <property type="molecule type" value="Genomic_DNA"/>
</dbReference>
<dbReference type="EMBL" id="X07948">
    <property type="protein sequence ID" value="CAA30774.1"/>
    <property type="molecule type" value="mRNA"/>
</dbReference>
<dbReference type="EMBL" id="BC029516">
    <property type="protein sequence ID" value="AAH29516.1"/>
    <property type="molecule type" value="mRNA"/>
</dbReference>
<dbReference type="CCDS" id="CCDS2406.1"/>
<dbReference type="PIR" id="A37106">
    <property type="entry name" value="BGHU"/>
</dbReference>
<dbReference type="RefSeq" id="NP_003275.1">
    <property type="nucleotide sequence ID" value="NM_003284.4"/>
</dbReference>
<dbReference type="BioGRID" id="112995">
    <property type="interactions" value="11"/>
</dbReference>
<dbReference type="FunCoup" id="P09430">
    <property type="interactions" value="25"/>
</dbReference>
<dbReference type="IntAct" id="P09430">
    <property type="interactions" value="2"/>
</dbReference>
<dbReference type="STRING" id="9606.ENSP00000236979"/>
<dbReference type="iPTMnet" id="P09430"/>
<dbReference type="PhosphoSitePlus" id="P09430"/>
<dbReference type="BioMuta" id="TNP1"/>
<dbReference type="PaxDb" id="9606-ENSP00000236979"/>
<dbReference type="Antibodypedia" id="34246">
    <property type="antibodies" value="120 antibodies from 23 providers"/>
</dbReference>
<dbReference type="DNASU" id="7141"/>
<dbReference type="Ensembl" id="ENST00000236979.2">
    <property type="protein sequence ID" value="ENSP00000236979.2"/>
    <property type="gene ID" value="ENSG00000118245.2"/>
</dbReference>
<dbReference type="GeneID" id="7141"/>
<dbReference type="KEGG" id="hsa:7141"/>
<dbReference type="MANE-Select" id="ENST00000236979.2">
    <property type="protein sequence ID" value="ENSP00000236979.2"/>
    <property type="RefSeq nucleotide sequence ID" value="NM_003284.4"/>
    <property type="RefSeq protein sequence ID" value="NP_003275.1"/>
</dbReference>
<dbReference type="AGR" id="HGNC:11951"/>
<dbReference type="CTD" id="7141"/>
<dbReference type="DisGeNET" id="7141"/>
<dbReference type="GeneCards" id="TNP1"/>
<dbReference type="HGNC" id="HGNC:11951">
    <property type="gene designation" value="TNP1"/>
</dbReference>
<dbReference type="HPA" id="ENSG00000118245">
    <property type="expression patterns" value="Tissue enriched (testis)"/>
</dbReference>
<dbReference type="MIM" id="190231">
    <property type="type" value="gene"/>
</dbReference>
<dbReference type="neXtProt" id="NX_P09430"/>
<dbReference type="OpenTargets" id="ENSG00000118245"/>
<dbReference type="PharmGKB" id="PA36640"/>
<dbReference type="VEuPathDB" id="HostDB:ENSG00000118245"/>
<dbReference type="eggNOG" id="ENOG502TKT1">
    <property type="taxonomic scope" value="Eukaryota"/>
</dbReference>
<dbReference type="GeneTree" id="ENSGT00390000000539"/>
<dbReference type="HOGENOM" id="CLU_3019482_0_0_1"/>
<dbReference type="InParanoid" id="P09430"/>
<dbReference type="OMA" id="FKSHGMR"/>
<dbReference type="PAN-GO" id="P09430">
    <property type="GO annotations" value="5 GO annotations based on evolutionary models"/>
</dbReference>
<dbReference type="PhylomeDB" id="P09430"/>
<dbReference type="TreeFam" id="TF338391"/>
<dbReference type="PathwayCommons" id="P09430"/>
<dbReference type="SignaLink" id="P09430"/>
<dbReference type="BioGRID-ORCS" id="7141">
    <property type="hits" value="32 hits in 1144 CRISPR screens"/>
</dbReference>
<dbReference type="GeneWiki" id="TNP1"/>
<dbReference type="GenomeRNAi" id="7141"/>
<dbReference type="Pharos" id="P09430">
    <property type="development level" value="Tbio"/>
</dbReference>
<dbReference type="PRO" id="PR:P09430"/>
<dbReference type="Proteomes" id="UP000005640">
    <property type="component" value="Chromosome 2"/>
</dbReference>
<dbReference type="RNAct" id="P09430">
    <property type="molecule type" value="protein"/>
</dbReference>
<dbReference type="Bgee" id="ENSG00000118245">
    <property type="expression patterns" value="Expressed in sperm and 104 other cell types or tissues"/>
</dbReference>
<dbReference type="ExpressionAtlas" id="P09430">
    <property type="expression patterns" value="baseline and differential"/>
</dbReference>
<dbReference type="GO" id="GO:0001673">
    <property type="term" value="C:male germ cell nucleus"/>
    <property type="evidence" value="ECO:0000318"/>
    <property type="project" value="GO_Central"/>
</dbReference>
<dbReference type="GO" id="GO:0000786">
    <property type="term" value="C:nucleosome"/>
    <property type="evidence" value="ECO:0000314"/>
    <property type="project" value="UniProtKB"/>
</dbReference>
<dbReference type="GO" id="GO:0005634">
    <property type="term" value="C:nucleus"/>
    <property type="evidence" value="ECO:0000250"/>
    <property type="project" value="UniProtKB"/>
</dbReference>
<dbReference type="GO" id="GO:0003677">
    <property type="term" value="F:DNA binding"/>
    <property type="evidence" value="ECO:0000315"/>
    <property type="project" value="UniProtKB"/>
</dbReference>
<dbReference type="GO" id="GO:0006338">
    <property type="term" value="P:chromatin remodeling"/>
    <property type="evidence" value="ECO:0000314"/>
    <property type="project" value="UniProtKB"/>
</dbReference>
<dbReference type="GO" id="GO:0030317">
    <property type="term" value="P:flagellated sperm motility"/>
    <property type="evidence" value="ECO:0000315"/>
    <property type="project" value="UniProtKB"/>
</dbReference>
<dbReference type="GO" id="GO:0031507">
    <property type="term" value="P:heterochromatin formation"/>
    <property type="evidence" value="ECO:0000270"/>
    <property type="project" value="UniProtKB"/>
</dbReference>
<dbReference type="GO" id="GO:0045892">
    <property type="term" value="P:negative regulation of DNA-templated transcription"/>
    <property type="evidence" value="ECO:0000314"/>
    <property type="project" value="UniProtKB"/>
</dbReference>
<dbReference type="GO" id="GO:0006337">
    <property type="term" value="P:nucleosome disassembly"/>
    <property type="evidence" value="ECO:0000315"/>
    <property type="project" value="UniProtKB"/>
</dbReference>
<dbReference type="GO" id="GO:0010954">
    <property type="term" value="P:positive regulation of protein processing"/>
    <property type="evidence" value="ECO:0000250"/>
    <property type="project" value="UniProtKB"/>
</dbReference>
<dbReference type="GO" id="GO:0019953">
    <property type="term" value="P:sexual reproduction"/>
    <property type="evidence" value="ECO:0000315"/>
    <property type="project" value="UniProtKB"/>
</dbReference>
<dbReference type="GO" id="GO:0000012">
    <property type="term" value="P:single strand break repair"/>
    <property type="evidence" value="ECO:0000314"/>
    <property type="project" value="UniProtKB"/>
</dbReference>
<dbReference type="GO" id="GO:0035092">
    <property type="term" value="P:sperm DNA condensation"/>
    <property type="evidence" value="ECO:0000250"/>
    <property type="project" value="UniProtKB"/>
</dbReference>
<dbReference type="GO" id="GO:0035041">
    <property type="term" value="P:sperm DNA decondensation"/>
    <property type="evidence" value="ECO:0000304"/>
    <property type="project" value="UniProtKB"/>
</dbReference>
<dbReference type="GO" id="GO:0007286">
    <property type="term" value="P:spermatid development"/>
    <property type="evidence" value="ECO:0000314"/>
    <property type="project" value="UniProtKB"/>
</dbReference>
<dbReference type="GO" id="GO:0007289">
    <property type="term" value="P:spermatid nucleus differentiation"/>
    <property type="evidence" value="ECO:0000304"/>
    <property type="project" value="UniProtKB"/>
</dbReference>
<dbReference type="GO" id="GO:0007290">
    <property type="term" value="P:spermatid nucleus elongation"/>
    <property type="evidence" value="ECO:0000315"/>
    <property type="project" value="UniProtKB"/>
</dbReference>
<dbReference type="InterPro" id="IPR001319">
    <property type="entry name" value="Nuclear_transition_prot1"/>
</dbReference>
<dbReference type="InterPro" id="IPR020062">
    <property type="entry name" value="Nuclear_transition_prot1_CS"/>
</dbReference>
<dbReference type="PANTHER" id="PTHR17486">
    <property type="entry name" value="SPERMATID NUCLEAR TRANSITION PROTEIN 1"/>
    <property type="match status" value="1"/>
</dbReference>
<dbReference type="PANTHER" id="PTHR17486:SF0">
    <property type="entry name" value="SPERMATID NUCLEAR TRANSITION PROTEIN 1"/>
    <property type="match status" value="1"/>
</dbReference>
<dbReference type="Pfam" id="PF02079">
    <property type="entry name" value="TP1"/>
    <property type="match status" value="1"/>
</dbReference>
<dbReference type="PROSITE" id="PS00541">
    <property type="entry name" value="TP1"/>
    <property type="match status" value="1"/>
</dbReference>
<organism>
    <name type="scientific">Homo sapiens</name>
    <name type="common">Human</name>
    <dbReference type="NCBI Taxonomy" id="9606"/>
    <lineage>
        <taxon>Eukaryota</taxon>
        <taxon>Metazoa</taxon>
        <taxon>Chordata</taxon>
        <taxon>Craniata</taxon>
        <taxon>Vertebrata</taxon>
        <taxon>Euteleostomi</taxon>
        <taxon>Mammalia</taxon>
        <taxon>Eutheria</taxon>
        <taxon>Euarchontoglires</taxon>
        <taxon>Primates</taxon>
        <taxon>Haplorrhini</taxon>
        <taxon>Catarrhini</taxon>
        <taxon>Hominidae</taxon>
        <taxon>Homo</taxon>
    </lineage>
</organism>
<keyword id="KW-0158">Chromosome</keyword>
<keyword id="KW-0217">Developmental protein</keyword>
<keyword id="KW-0221">Differentiation</keyword>
<keyword id="KW-0238">DNA-binding</keyword>
<keyword id="KW-0544">Nucleosome core</keyword>
<keyword id="KW-0539">Nucleus</keyword>
<keyword id="KW-0597">Phosphoprotein</keyword>
<keyword id="KW-1185">Reference proteome</keyword>
<keyword id="KW-0744">Spermatogenesis</keyword>
<comment type="function">
    <text evidence="1">Plays a key role in the replacement of histones to protamine in the elongating spermatids of mammals. In condensing spermatids, loaded onto the nucleosomes, where it promotes the recruitment and processing of protamines, which are responsible for histone eviction.</text>
</comment>
<comment type="interaction">
    <interactant intactId="EBI-10196343">
        <id>P09430</id>
    </interactant>
    <interactant intactId="EBI-739789">
        <id>Q92997</id>
        <label>DVL3</label>
    </interactant>
    <organismsDiffer>false</organismsDiffer>
    <experiments>3</experiments>
</comment>
<comment type="interaction">
    <interactant intactId="EBI-10196343">
        <id>P09430</id>
    </interactant>
    <interactant intactId="EBI-742426">
        <id>Q9H190</id>
        <label>SDCBP2</label>
    </interactant>
    <organismsDiffer>false</organismsDiffer>
    <experiments>4</experiments>
</comment>
<comment type="subcellular location">
    <subcellularLocation>
        <location evidence="1">Nucleus</location>
    </subcellularLocation>
    <subcellularLocation>
        <location evidence="1">Chromosome</location>
    </subcellularLocation>
    <text evidence="1">Loaded onto the nucleosomes of condensing spermatids.</text>
</comment>
<comment type="tissue specificity">
    <text evidence="4">Expressed by spermatids (at protein level).</text>
</comment>
<comment type="similarity">
    <text evidence="5">Belongs to the nuclear transition protein 1 family.</text>
</comment>
<sequence>MSTSRKLKSHGMRRSKSRSPHKGVKRGGSKRKYRKGNLKSRKRGDDANRNYRSHL</sequence>
<gene>
    <name type="primary">TNP1</name>
</gene>
<name>STP1_HUMAN</name>